<dbReference type="EMBL" id="MW317125">
    <property type="protein sequence ID" value="UPH34158.1"/>
    <property type="molecule type" value="mRNA"/>
</dbReference>
<dbReference type="SMR" id="A0A8U0LTM5"/>
<dbReference type="GO" id="GO:0005576">
    <property type="term" value="C:extracellular region"/>
    <property type="evidence" value="ECO:0007669"/>
    <property type="project" value="UniProtKB-SubCell"/>
</dbReference>
<dbReference type="GO" id="GO:0090729">
    <property type="term" value="F:toxin activity"/>
    <property type="evidence" value="ECO:0007669"/>
    <property type="project" value="UniProtKB-KW"/>
</dbReference>
<dbReference type="Gene3D" id="2.10.25.10">
    <property type="entry name" value="Laminin"/>
    <property type="match status" value="1"/>
</dbReference>
<dbReference type="SUPFAM" id="SSF57196">
    <property type="entry name" value="EGF/Laminin"/>
    <property type="match status" value="1"/>
</dbReference>
<dbReference type="PROSITE" id="PS00022">
    <property type="entry name" value="EGF_1"/>
    <property type="match status" value="1"/>
</dbReference>
<organism>
    <name type="scientific">Rhytidoponera metallica</name>
    <name type="common">Australian green-headed ant</name>
    <name type="synonym">Ponera metallica</name>
    <dbReference type="NCBI Taxonomy" id="148364"/>
    <lineage>
        <taxon>Eukaryota</taxon>
        <taxon>Metazoa</taxon>
        <taxon>Ecdysozoa</taxon>
        <taxon>Arthropoda</taxon>
        <taxon>Hexapoda</taxon>
        <taxon>Insecta</taxon>
        <taxon>Pterygota</taxon>
        <taxon>Neoptera</taxon>
        <taxon>Endopterygota</taxon>
        <taxon>Hymenoptera</taxon>
        <taxon>Apocrita</taxon>
        <taxon>Aculeata</taxon>
        <taxon>Formicoidea</taxon>
        <taxon>Formicidae</taxon>
        <taxon>Ectatomminae</taxon>
        <taxon>Ectatommini</taxon>
        <taxon>Rhytidoponera</taxon>
    </lineage>
</organism>
<reference key="1">
    <citation type="journal article" date="2022" name="Proc. Natl. Acad. Sci. U.S.A.">
        <title>A peptide toxin in ant venom mimics vertebrate EGF-like hormones to cause long-lasting hypersensitivity in mammals.</title>
        <authorList>
            <person name="Eagles D.A."/>
            <person name="Saez N.J."/>
            <person name="Krishnarjuna B."/>
            <person name="Bradford J.J."/>
            <person name="Chin Y.K."/>
            <person name="Starobova H."/>
            <person name="Mueller A."/>
            <person name="Reichelt M.E."/>
            <person name="Undheim E.A.B."/>
            <person name="Norton R.S."/>
            <person name="Thomas W.G."/>
            <person name="Vetter I."/>
            <person name="King G.F."/>
            <person name="Robinson S.D."/>
        </authorList>
    </citation>
    <scope>NUCLEOTIDE SEQUENCE [MRNA]</scope>
    <source>
        <tissue>Venom gland</tissue>
    </source>
</reference>
<accession>A0A8U0LTM5</accession>
<sequence>MKDSYISIVIAYLMVTFILVSSMPIEGEKGELGPHRLPCPPGYENYCFNGKCVHVVAQDEPGKPCYSCICDEFYIGERCGTLDLTNPGYFLKG</sequence>
<name>TX21C_RHYMT</name>
<evidence type="ECO:0000250" key="1">
    <source>
        <dbReference type="UniProtKB" id="P0DQX9"/>
    </source>
</evidence>
<evidence type="ECO:0000250" key="2">
    <source>
        <dbReference type="UniProtKB" id="P0DSL4"/>
    </source>
</evidence>
<evidence type="ECO:0000303" key="3">
    <source>
    </source>
</evidence>
<evidence type="ECO:0000305" key="4"/>
<comment type="function">
    <text evidence="2">Ant peptide with probable defensive activity which acts as a potent agonist of the mammalian epidermal growth factor receptor (EGFR). Mimics, both structurally and functionally, vertebrate epidermal growth factor (EGF) peptide hormones. In vivo, intraplantar injection in mice causes long-lasting (several days) hypersensitivity of the injected paw to both mechanical and thermal stimuli. Its long-lasting effect is unusual for venom toxins whose effects are usually immediate. One possible explanation is that it would reduce the duration of a nest attack, discourage future attacks, or enhance the actions of subsequent exposure to other pain-inducing venom peptides.</text>
</comment>
<comment type="subcellular location">
    <subcellularLocation>
        <location evidence="2">Secreted</location>
    </subcellularLocation>
</comment>
<comment type="tissue specificity">
    <text evidence="2">Expressed by the venom gland.</text>
</comment>
<comment type="similarity">
    <text evidence="4">Belongs to the EGF domain peptide family.</text>
</comment>
<proteinExistence type="inferred from homology"/>
<keyword id="KW-1015">Disulfide bond</keyword>
<keyword id="KW-0245">EGF-like domain</keyword>
<keyword id="KW-0528">Neurotoxin</keyword>
<keyword id="KW-0964">Secreted</keyword>
<keyword id="KW-0732">Signal</keyword>
<keyword id="KW-0800">Toxin</keyword>
<feature type="signal peptide" evidence="2">
    <location>
        <begin position="1"/>
        <end position="30"/>
    </location>
</feature>
<feature type="chain" id="PRO_0000457848" description="OMEGA-ectatommitoxin(02)-Rm1c">
    <location>
        <begin position="31"/>
        <end position="93"/>
    </location>
</feature>
<feature type="domain" description="EGF-like" evidence="1 4">
    <location>
        <begin position="43"/>
        <end position="80"/>
    </location>
</feature>
<feature type="disulfide bond" evidence="2">
    <location>
        <begin position="39"/>
        <end position="52"/>
    </location>
</feature>
<feature type="disulfide bond" evidence="2">
    <location>
        <begin position="47"/>
        <end position="68"/>
    </location>
</feature>
<feature type="disulfide bond" evidence="2">
    <location>
        <begin position="70"/>
        <end position="79"/>
    </location>
</feature>
<protein>
    <recommendedName>
        <fullName evidence="4">OMEGA-ectatommitoxin(02)-Rm1c</fullName>
        <shortName evidence="3">ECTX2-Rm1c</shortName>
        <shortName evidence="4">OMEGA-ECTX2-Rm1c</shortName>
    </recommendedName>
</protein>